<keyword id="KW-0460">Magnesium</keyword>
<keyword id="KW-0479">Metal-binding</keyword>
<keyword id="KW-0808">Transferase</keyword>
<comment type="function">
    <text evidence="2 6 7">Geranylgeranyl pyrophosphate synthase; part of the gene cluster that mediates the biosynthesis of the immunosuppressants subglutinols, meroterpenoids consisting of an alpha-pyrone (4-hydroxy-5,6-dimethyl-2-pyrone) moiety attached to a decalin core fused to a five-membered cyclic ether carrying a prenylside chain (PubMed:27189118). The first step of the pathway is the synthesis of the alpha-pyrone moiety by the polyketide synthase subA via condensation of one acetyl-CoA starter unit with 3 malonyl-CoA units and 2 methylations (PubMed:27189118). The alpha-pyrone is then combined with geranylgeranyl pyrophosphate (GGPP) formed by the GGPP synthase subD through the action of the prenyltransferase subC to yield a linear alpha-pyrone diterpenoid (PubMed:27189118). Subsequent steps in the subglutinol biosynthetic pathway involve the decalin core formation, which is thought to be initiated by the epoxidation of the C10-C11 olefin by the FAD-dependent oxidoreductase subE (Probable). The following cyclization cascade would be catalyzed by the terpene cyclase subB (Probable). Lastly, the FAD-dependent dehydrogenase subF probably catalyzes the five-membered cyclic ether formation to complete the formation of subglutinol A (Probable). Subsequent redox reactions appear to give rise to subglutinol C and D, however, it remains unclear which enzymes are responsible for these transformations (Probable). SubD may have secondary function in the conversion of the identified subglutinols to subglutinol analog 45, which seems to be the major product of the cluster (PubMed:34863012).</text>
</comment>
<comment type="catalytic activity">
    <reaction evidence="1">
        <text>isopentenyl diphosphate + dimethylallyl diphosphate = (2E)-geranyl diphosphate + diphosphate</text>
        <dbReference type="Rhea" id="RHEA:22408"/>
        <dbReference type="ChEBI" id="CHEBI:33019"/>
        <dbReference type="ChEBI" id="CHEBI:57623"/>
        <dbReference type="ChEBI" id="CHEBI:58057"/>
        <dbReference type="ChEBI" id="CHEBI:128769"/>
        <dbReference type="EC" id="2.5.1.1"/>
    </reaction>
</comment>
<comment type="catalytic activity">
    <reaction evidence="1">
        <text>isopentenyl diphosphate + (2E)-geranyl diphosphate = (2E,6E)-farnesyl diphosphate + diphosphate</text>
        <dbReference type="Rhea" id="RHEA:19361"/>
        <dbReference type="ChEBI" id="CHEBI:33019"/>
        <dbReference type="ChEBI" id="CHEBI:58057"/>
        <dbReference type="ChEBI" id="CHEBI:128769"/>
        <dbReference type="ChEBI" id="CHEBI:175763"/>
        <dbReference type="EC" id="2.5.1.10"/>
    </reaction>
</comment>
<comment type="catalytic activity">
    <reaction evidence="1">
        <text>isopentenyl diphosphate + (2E,6E)-farnesyl diphosphate = (2E,6E,10E)-geranylgeranyl diphosphate + diphosphate</text>
        <dbReference type="Rhea" id="RHEA:17653"/>
        <dbReference type="ChEBI" id="CHEBI:33019"/>
        <dbReference type="ChEBI" id="CHEBI:58756"/>
        <dbReference type="ChEBI" id="CHEBI:128769"/>
        <dbReference type="ChEBI" id="CHEBI:175763"/>
        <dbReference type="EC" id="2.5.1.29"/>
    </reaction>
</comment>
<comment type="cofactor">
    <cofactor evidence="1">
        <name>Mg(2+)</name>
        <dbReference type="ChEBI" id="CHEBI:18420"/>
    </cofactor>
    <text evidence="1">Binds 3 Mg(2+) ions per subunit.</text>
</comment>
<comment type="pathway">
    <text evidence="2">Secondary metabolite biosynthesis; terpenoid biosynthesis.</text>
</comment>
<comment type="induction">
    <text evidence="3">The subglutinol cluster is highly expressed when mycelia and hyphae are transferred to fresh media for a 3 hour induction period, remaining expressed under conditions of heat shock (PubMed:34863012). The cluster is repressed in cultures reaching stationary phase or in early germinating cultures, as well as under conditions of UV, salt and oxidative stress (PubMed:34863012).</text>
</comment>
<comment type="disruption phenotype">
    <text evidence="3">Results in faster growth and increased resistances to heat and UV stress (PubMed:34863012). Also leads to increased virulence using S.furcifera as the insect host (PubMed:34863012).</text>
</comment>
<comment type="similarity">
    <text evidence="5">Belongs to the FPP/GGPP synthase family.</text>
</comment>
<proteinExistence type="evidence at protein level"/>
<feature type="chain" id="PRO_0000451340" description="Geranylgeranyl pyrophosphate synthase subD">
    <location>
        <begin position="1"/>
        <end position="337"/>
    </location>
</feature>
<feature type="binding site" evidence="1">
    <location>
        <position position="53"/>
    </location>
    <ligand>
        <name>isopentenyl diphosphate</name>
        <dbReference type="ChEBI" id="CHEBI:128769"/>
    </ligand>
</feature>
<feature type="binding site" evidence="1">
    <location>
        <position position="56"/>
    </location>
    <ligand>
        <name>isopentenyl diphosphate</name>
        <dbReference type="ChEBI" id="CHEBI:128769"/>
    </ligand>
</feature>
<feature type="binding site" evidence="1">
    <location>
        <position position="85"/>
    </location>
    <ligand>
        <name>isopentenyl diphosphate</name>
        <dbReference type="ChEBI" id="CHEBI:128769"/>
    </ligand>
</feature>
<feature type="binding site" evidence="1">
    <location>
        <position position="92"/>
    </location>
    <ligand>
        <name>Mg(2+)</name>
        <dbReference type="ChEBI" id="CHEBI:18420"/>
        <label>1</label>
    </ligand>
</feature>
<feature type="binding site" evidence="1">
    <location>
        <position position="92"/>
    </location>
    <ligand>
        <name>Mg(2+)</name>
        <dbReference type="ChEBI" id="CHEBI:18420"/>
        <label>2</label>
    </ligand>
</feature>
<feature type="binding site" evidence="1">
    <location>
        <position position="96"/>
    </location>
    <ligand>
        <name>Mg(2+)</name>
        <dbReference type="ChEBI" id="CHEBI:18420"/>
        <label>1</label>
    </ligand>
</feature>
<feature type="binding site" evidence="1">
    <location>
        <position position="96"/>
    </location>
    <ligand>
        <name>Mg(2+)</name>
        <dbReference type="ChEBI" id="CHEBI:18420"/>
        <label>2</label>
    </ligand>
</feature>
<feature type="binding site" evidence="1">
    <location>
        <position position="101"/>
    </location>
    <ligand>
        <name>dimethylallyl diphosphate</name>
        <dbReference type="ChEBI" id="CHEBI:57623"/>
    </ligand>
</feature>
<feature type="binding site" evidence="1">
    <location>
        <position position="102"/>
    </location>
    <ligand>
        <name>isopentenyl diphosphate</name>
        <dbReference type="ChEBI" id="CHEBI:128769"/>
    </ligand>
</feature>
<feature type="binding site" evidence="1">
    <location>
        <position position="179"/>
    </location>
    <ligand>
        <name>dimethylallyl diphosphate</name>
        <dbReference type="ChEBI" id="CHEBI:57623"/>
    </ligand>
</feature>
<feature type="binding site" evidence="1">
    <location>
        <position position="180"/>
    </location>
    <ligand>
        <name>dimethylallyl diphosphate</name>
        <dbReference type="ChEBI" id="CHEBI:57623"/>
    </ligand>
</feature>
<feature type="binding site" evidence="1">
    <location>
        <position position="219"/>
    </location>
    <ligand>
        <name>dimethylallyl diphosphate</name>
        <dbReference type="ChEBI" id="CHEBI:57623"/>
    </ligand>
</feature>
<feature type="binding site" evidence="1">
    <location>
        <position position="222"/>
    </location>
    <ligand>
        <name>Mg(2+)</name>
        <dbReference type="ChEBI" id="CHEBI:18420"/>
        <label>3</label>
    </ligand>
</feature>
<feature type="binding site" evidence="1">
    <location>
        <position position="226"/>
    </location>
    <ligand>
        <name>dimethylallyl diphosphate</name>
        <dbReference type="ChEBI" id="CHEBI:57623"/>
    </ligand>
</feature>
<feature type="binding site" evidence="1">
    <location>
        <position position="236"/>
    </location>
    <ligand>
        <name>dimethylallyl diphosphate</name>
        <dbReference type="ChEBI" id="CHEBI:57623"/>
    </ligand>
</feature>
<feature type="binding site" evidence="1">
    <location>
        <position position="246"/>
    </location>
    <ligand>
        <name>dimethylallyl diphosphate</name>
        <dbReference type="ChEBI" id="CHEBI:57623"/>
    </ligand>
</feature>
<feature type="site" description="Important for determining product chain length" evidence="1">
    <location>
        <position position="124"/>
    </location>
</feature>
<sequence length="337" mass="37734">MSPSAPNTNELNSPVLETQPLAGDAALLHSSIAAGYEEIIRAPFDYLLNLPGKDVRSKMISAFNEWLCIPADKLEVIKRIVMLLHNASLLIDDIQDSSKLRRGLPVSHHIFGVPQTINAANYAYFLAQQELPKLGDPKAFEIYTEELLSLHRGQGMDIYWREASKCPTEEEYFSMVSHKTGGLFRLAIRLMQLASDKNWFVFHTRDFVPLVNVLGVIFQIRDDYLNLQSHAYTVNKGFGEDLTEGKYSFPIIHSIRSDPTNIQLSSILKQRTTDVDVKLFAVECIKATGSFEHCKEKIAELVAEARQLIKEMGNSVPGSAEAVDRVLDLIGLEPESS</sequence>
<dbReference type="EC" id="2.5.1.-" evidence="2"/>
<dbReference type="EC" id="2.5.1.1" evidence="1"/>
<dbReference type="EC" id="2.5.1.29" evidence="1"/>
<dbReference type="EC" id="2.5.1.10" evidence="1"/>
<dbReference type="EMBL" id="ADNJ02000014">
    <property type="protein sequence ID" value="EFY96952.1"/>
    <property type="molecule type" value="Genomic_DNA"/>
</dbReference>
<dbReference type="RefSeq" id="XP_007823687.1">
    <property type="nucleotide sequence ID" value="XM_007825496.1"/>
</dbReference>
<dbReference type="SMR" id="E9F5E9"/>
<dbReference type="GeneID" id="19261784"/>
<dbReference type="KEGG" id="maj:MAA_07498"/>
<dbReference type="HOGENOM" id="CLU_014015_6_0_1"/>
<dbReference type="OrthoDB" id="6921389at2759"/>
<dbReference type="UniPathway" id="UPA00213"/>
<dbReference type="Proteomes" id="UP000002498">
    <property type="component" value="Unassembled WGS sequence"/>
</dbReference>
<dbReference type="GO" id="GO:0004337">
    <property type="term" value="F:(2E,6E)-farnesyl diphosphate synthase activity"/>
    <property type="evidence" value="ECO:0007669"/>
    <property type="project" value="UniProtKB-EC"/>
</dbReference>
<dbReference type="GO" id="GO:0004161">
    <property type="term" value="F:dimethylallyltranstransferase activity"/>
    <property type="evidence" value="ECO:0007669"/>
    <property type="project" value="UniProtKB-EC"/>
</dbReference>
<dbReference type="GO" id="GO:0004311">
    <property type="term" value="F:geranylgeranyl diphosphate synthase activity"/>
    <property type="evidence" value="ECO:0007669"/>
    <property type="project" value="UniProtKB-EC"/>
</dbReference>
<dbReference type="GO" id="GO:0046872">
    <property type="term" value="F:metal ion binding"/>
    <property type="evidence" value="ECO:0007669"/>
    <property type="project" value="UniProtKB-KW"/>
</dbReference>
<dbReference type="GO" id="GO:0046165">
    <property type="term" value="P:alcohol biosynthetic process"/>
    <property type="evidence" value="ECO:0007669"/>
    <property type="project" value="UniProtKB-ARBA"/>
</dbReference>
<dbReference type="GO" id="GO:0043386">
    <property type="term" value="P:mycotoxin biosynthetic process"/>
    <property type="evidence" value="ECO:0007669"/>
    <property type="project" value="UniProtKB-ARBA"/>
</dbReference>
<dbReference type="GO" id="GO:0016114">
    <property type="term" value="P:terpenoid biosynthetic process"/>
    <property type="evidence" value="ECO:0007669"/>
    <property type="project" value="UniProtKB-UniPathway"/>
</dbReference>
<dbReference type="CDD" id="cd00685">
    <property type="entry name" value="Trans_IPPS_HT"/>
    <property type="match status" value="1"/>
</dbReference>
<dbReference type="Gene3D" id="1.10.600.10">
    <property type="entry name" value="Farnesyl Diphosphate Synthase"/>
    <property type="match status" value="1"/>
</dbReference>
<dbReference type="InterPro" id="IPR008949">
    <property type="entry name" value="Isoprenoid_synthase_dom_sf"/>
</dbReference>
<dbReference type="InterPro" id="IPR000092">
    <property type="entry name" value="Polyprenyl_synt"/>
</dbReference>
<dbReference type="InterPro" id="IPR033749">
    <property type="entry name" value="Polyprenyl_synt_CS"/>
</dbReference>
<dbReference type="PANTHER" id="PTHR12001">
    <property type="entry name" value="GERANYLGERANYL PYROPHOSPHATE SYNTHASE"/>
    <property type="match status" value="1"/>
</dbReference>
<dbReference type="PANTHER" id="PTHR12001:SF70">
    <property type="entry name" value="PYROPHOSPHATE SYNTHETASE ATMG, PUTATIVE (AFU_ORTHOLOGUE AFUA_8G02400)-RELATED"/>
    <property type="match status" value="1"/>
</dbReference>
<dbReference type="Pfam" id="PF00348">
    <property type="entry name" value="polyprenyl_synt"/>
    <property type="match status" value="1"/>
</dbReference>
<dbReference type="SFLD" id="SFLDS00005">
    <property type="entry name" value="Isoprenoid_Synthase_Type_I"/>
    <property type="match status" value="1"/>
</dbReference>
<dbReference type="SFLD" id="SFLDG01017">
    <property type="entry name" value="Polyprenyl_Transferase_Like"/>
    <property type="match status" value="1"/>
</dbReference>
<dbReference type="SUPFAM" id="SSF48576">
    <property type="entry name" value="Terpenoid synthases"/>
    <property type="match status" value="1"/>
</dbReference>
<dbReference type="PROSITE" id="PS00723">
    <property type="entry name" value="POLYPRENYL_SYNTHASE_1"/>
    <property type="match status" value="1"/>
</dbReference>
<dbReference type="PROSITE" id="PS00444">
    <property type="entry name" value="POLYPRENYL_SYNTHASE_2"/>
    <property type="match status" value="1"/>
</dbReference>
<name>SUBD_METRA</name>
<accession>E9F5E9</accession>
<organism>
    <name type="scientific">Metarhizium robertsii (strain ARSEF 23 / ATCC MYA-3075)</name>
    <name type="common">Metarhizium anisopliae (strain ARSEF 23)</name>
    <dbReference type="NCBI Taxonomy" id="655844"/>
    <lineage>
        <taxon>Eukaryota</taxon>
        <taxon>Fungi</taxon>
        <taxon>Dikarya</taxon>
        <taxon>Ascomycota</taxon>
        <taxon>Pezizomycotina</taxon>
        <taxon>Sordariomycetes</taxon>
        <taxon>Hypocreomycetidae</taxon>
        <taxon>Hypocreales</taxon>
        <taxon>Clavicipitaceae</taxon>
        <taxon>Metarhizium</taxon>
    </lineage>
</organism>
<evidence type="ECO:0000250" key="1">
    <source>
        <dbReference type="UniProtKB" id="Q12051"/>
    </source>
</evidence>
<evidence type="ECO:0000269" key="2">
    <source>
    </source>
</evidence>
<evidence type="ECO:0000269" key="3">
    <source>
    </source>
</evidence>
<evidence type="ECO:0000303" key="4">
    <source>
    </source>
</evidence>
<evidence type="ECO:0000305" key="5"/>
<evidence type="ECO:0000305" key="6">
    <source>
    </source>
</evidence>
<evidence type="ECO:0000305" key="7">
    <source>
    </source>
</evidence>
<reference key="1">
    <citation type="journal article" date="2011" name="PLoS Genet.">
        <title>Genome sequencing and comparative transcriptomics of the model entomopathogenic fungi Metarhizium anisopliae and M. acridum.</title>
        <authorList>
            <person name="Gao Q."/>
            <person name="Jin K."/>
            <person name="Ying S.-H."/>
            <person name="Zhang Y."/>
            <person name="Xiao G."/>
            <person name="Shang Y."/>
            <person name="Duan Z."/>
            <person name="Hu X."/>
            <person name="Xie X.-Q."/>
            <person name="Zhou G."/>
            <person name="Peng G."/>
            <person name="Luo Z."/>
            <person name="Huang W."/>
            <person name="Wang B."/>
            <person name="Fang W."/>
            <person name="Wang S."/>
            <person name="Zhong Y."/>
            <person name="Ma L.-J."/>
            <person name="St Leger R.J."/>
            <person name="Zhao G.-P."/>
            <person name="Pei Y."/>
            <person name="Feng M.-G."/>
            <person name="Xia Y."/>
            <person name="Wang C."/>
        </authorList>
    </citation>
    <scope>NUCLEOTIDE SEQUENCE [LARGE SCALE GENOMIC DNA]</scope>
    <source>
        <strain>ARSEF 23 / ATCC MYA-3075</strain>
    </source>
</reference>
<reference key="2">
    <citation type="journal article" date="2014" name="Proc. Natl. Acad. Sci. U.S.A.">
        <title>Trajectory and genomic determinants of fungal-pathogen speciation and host adaptation.</title>
        <authorList>
            <person name="Hu X."/>
            <person name="Xiao G."/>
            <person name="Zheng P."/>
            <person name="Shang Y."/>
            <person name="Su Y."/>
            <person name="Zhang X."/>
            <person name="Liu X."/>
            <person name="Zhan S."/>
            <person name="St Leger R.J."/>
            <person name="Wang C."/>
        </authorList>
    </citation>
    <scope>GENOME REANNOTATION</scope>
    <source>
        <strain>ARSEF 23 / ATCC MYA-3075</strain>
    </source>
</reference>
<reference key="3">
    <citation type="journal article" date="2016" name="J. Antibiot.">
        <title>New natural products isolated from Metarhizium robertsii ARSEF 23 by chemical screening and identification of the gene cluster through engineered biosynthesis in Aspergillus nidulans A1145.</title>
        <authorList>
            <person name="Kato H."/>
            <person name="Tsunematsu Y."/>
            <person name="Yamamoto T."/>
            <person name="Namiki T."/>
            <person name="Kishimoto S."/>
            <person name="Noguchi H."/>
            <person name="Watanabe K."/>
        </authorList>
    </citation>
    <scope>FUNCTION</scope>
    <scope>CATALYTIC ACTIVITY</scope>
    <scope>PATHWAY</scope>
</reference>
<reference key="4">
    <citation type="journal article" date="2022" name="Environ. Microbiol.">
        <title>Mutation of a prenyltransferase results in accumulation of subglutinols and destruxins and enhanced virulence in the insect pathogen, Metarhizium anisopliae.</title>
        <authorList>
            <person name="Li C."/>
            <person name="Huang W."/>
            <person name="Zhou T."/>
            <person name="Zhao Q."/>
            <person name="Huang P."/>
            <person name="Qi P."/>
            <person name="Huang S."/>
            <person name="Huang S."/>
            <person name="Keyhani N.O."/>
            <person name="Huang Z."/>
        </authorList>
    </citation>
    <scope>FUNCTION</scope>
    <scope>INDUCTION</scope>
    <scope>DISRUPTION PHENOTYPE</scope>
</reference>
<protein>
    <recommendedName>
        <fullName evidence="4">Geranylgeranyl pyrophosphate synthase subD</fullName>
        <shortName evidence="5">GGPP synthase</shortName>
        <shortName evidence="5">GGPPSase</shortName>
        <ecNumber evidence="2">2.5.1.-</ecNumber>
    </recommendedName>
    <alternativeName>
        <fullName evidence="1">(2E,6E)-farnesyl diphosphate synthase</fullName>
    </alternativeName>
    <alternativeName>
        <fullName evidence="1">Dimethylallyltranstransferase</fullName>
        <ecNumber evidence="1">2.5.1.1</ecNumber>
    </alternativeName>
    <alternativeName>
        <fullName evidence="1">Farnesyl diphosphate synthase</fullName>
    </alternativeName>
    <alternativeName>
        <fullName evidence="1">Farnesyltranstransferase</fullName>
        <ecNumber evidence="1">2.5.1.29</ecNumber>
    </alternativeName>
    <alternativeName>
        <fullName evidence="1">Geranylgeranyl diphosphate synthase</fullName>
    </alternativeName>
    <alternativeName>
        <fullName evidence="1">Geranyltranstransferase</fullName>
        <ecNumber evidence="1">2.5.1.10</ecNumber>
    </alternativeName>
    <alternativeName>
        <fullName evidence="4">Subglutinol biosynthesis cluster protein D</fullName>
    </alternativeName>
</protein>
<gene>
    <name evidence="4" type="primary">subD</name>
    <name type="ORF">MAA_07498</name>
</gene>